<feature type="chain" id="PRO_0000267874" description="Large ribosomal subunit protein bL17">
    <location>
        <begin position="1"/>
        <end position="178"/>
    </location>
</feature>
<feature type="region of interest" description="Disordered" evidence="2">
    <location>
        <begin position="150"/>
        <end position="178"/>
    </location>
</feature>
<feature type="compositionally biased region" description="Basic and acidic residues" evidence="2">
    <location>
        <begin position="168"/>
        <end position="178"/>
    </location>
</feature>
<dbReference type="EMBL" id="CP000148">
    <property type="protein sequence ID" value="ABB30896.1"/>
    <property type="molecule type" value="Genomic_DNA"/>
</dbReference>
<dbReference type="RefSeq" id="WP_004514262.1">
    <property type="nucleotide sequence ID" value="NC_007517.1"/>
</dbReference>
<dbReference type="SMR" id="Q39XX8"/>
<dbReference type="STRING" id="269799.Gmet_0654"/>
<dbReference type="KEGG" id="gme:Gmet_0654"/>
<dbReference type="eggNOG" id="COG0203">
    <property type="taxonomic scope" value="Bacteria"/>
</dbReference>
<dbReference type="HOGENOM" id="CLU_074407_0_1_7"/>
<dbReference type="Proteomes" id="UP000007073">
    <property type="component" value="Chromosome"/>
</dbReference>
<dbReference type="GO" id="GO:0022625">
    <property type="term" value="C:cytosolic large ribosomal subunit"/>
    <property type="evidence" value="ECO:0007669"/>
    <property type="project" value="TreeGrafter"/>
</dbReference>
<dbReference type="GO" id="GO:0003735">
    <property type="term" value="F:structural constituent of ribosome"/>
    <property type="evidence" value="ECO:0007669"/>
    <property type="project" value="InterPro"/>
</dbReference>
<dbReference type="GO" id="GO:0006412">
    <property type="term" value="P:translation"/>
    <property type="evidence" value="ECO:0007669"/>
    <property type="project" value="UniProtKB-UniRule"/>
</dbReference>
<dbReference type="FunFam" id="3.90.1030.10:FF:000001">
    <property type="entry name" value="50S ribosomal protein L17"/>
    <property type="match status" value="1"/>
</dbReference>
<dbReference type="Gene3D" id="3.90.1030.10">
    <property type="entry name" value="Ribosomal protein L17"/>
    <property type="match status" value="1"/>
</dbReference>
<dbReference type="HAMAP" id="MF_01368">
    <property type="entry name" value="Ribosomal_bL17"/>
    <property type="match status" value="1"/>
</dbReference>
<dbReference type="InterPro" id="IPR000456">
    <property type="entry name" value="Ribosomal_bL17"/>
</dbReference>
<dbReference type="InterPro" id="IPR047859">
    <property type="entry name" value="Ribosomal_bL17_CS"/>
</dbReference>
<dbReference type="InterPro" id="IPR036373">
    <property type="entry name" value="Ribosomal_bL17_sf"/>
</dbReference>
<dbReference type="NCBIfam" id="TIGR00059">
    <property type="entry name" value="L17"/>
    <property type="match status" value="1"/>
</dbReference>
<dbReference type="PANTHER" id="PTHR14413:SF16">
    <property type="entry name" value="LARGE RIBOSOMAL SUBUNIT PROTEIN BL17M"/>
    <property type="match status" value="1"/>
</dbReference>
<dbReference type="PANTHER" id="PTHR14413">
    <property type="entry name" value="RIBOSOMAL PROTEIN L17"/>
    <property type="match status" value="1"/>
</dbReference>
<dbReference type="Pfam" id="PF01196">
    <property type="entry name" value="Ribosomal_L17"/>
    <property type="match status" value="1"/>
</dbReference>
<dbReference type="SUPFAM" id="SSF64263">
    <property type="entry name" value="Prokaryotic ribosomal protein L17"/>
    <property type="match status" value="1"/>
</dbReference>
<dbReference type="PROSITE" id="PS01167">
    <property type="entry name" value="RIBOSOMAL_L17"/>
    <property type="match status" value="1"/>
</dbReference>
<keyword id="KW-1185">Reference proteome</keyword>
<keyword id="KW-0687">Ribonucleoprotein</keyword>
<keyword id="KW-0689">Ribosomal protein</keyword>
<protein>
    <recommendedName>
        <fullName evidence="1">Large ribosomal subunit protein bL17</fullName>
    </recommendedName>
    <alternativeName>
        <fullName evidence="3">50S ribosomal protein L17</fullName>
    </alternativeName>
</protein>
<accession>Q39XX8</accession>
<organism>
    <name type="scientific">Geobacter metallireducens (strain ATCC 53774 / DSM 7210 / GS-15)</name>
    <dbReference type="NCBI Taxonomy" id="269799"/>
    <lineage>
        <taxon>Bacteria</taxon>
        <taxon>Pseudomonadati</taxon>
        <taxon>Thermodesulfobacteriota</taxon>
        <taxon>Desulfuromonadia</taxon>
        <taxon>Geobacterales</taxon>
        <taxon>Geobacteraceae</taxon>
        <taxon>Geobacter</taxon>
    </lineage>
</organism>
<sequence>MRHNKAGRRLGRTTSHRIAMFRNMVTSFLEHERITTTDAKAKELRSIAEKMITLGKRGDLHAQRQAASYIRDKKVVTKLFSTIAPRYKERDGGYTRIIKLGIRPGDNAPLSVIELVEEQVNKKEKKAKPAKAAIVATAPAVEQAAVLTSPADEPVVAEENAPQSAVKDAVDECEGKAD</sequence>
<name>RL17_GEOMG</name>
<gene>
    <name evidence="1" type="primary">rplQ</name>
    <name type="ordered locus">Gmet_0654</name>
</gene>
<reference key="1">
    <citation type="journal article" date="2009" name="BMC Microbiol.">
        <title>The genome sequence of Geobacter metallireducens: features of metabolism, physiology and regulation common and dissimilar to Geobacter sulfurreducens.</title>
        <authorList>
            <person name="Aklujkar M."/>
            <person name="Krushkal J."/>
            <person name="DiBartolo G."/>
            <person name="Lapidus A."/>
            <person name="Land M.L."/>
            <person name="Lovley D.R."/>
        </authorList>
    </citation>
    <scope>NUCLEOTIDE SEQUENCE [LARGE SCALE GENOMIC DNA]</scope>
    <source>
        <strain>ATCC 53774 / DSM 7210 / GS-15</strain>
    </source>
</reference>
<evidence type="ECO:0000255" key="1">
    <source>
        <dbReference type="HAMAP-Rule" id="MF_01368"/>
    </source>
</evidence>
<evidence type="ECO:0000256" key="2">
    <source>
        <dbReference type="SAM" id="MobiDB-lite"/>
    </source>
</evidence>
<evidence type="ECO:0000305" key="3"/>
<comment type="subunit">
    <text evidence="1">Part of the 50S ribosomal subunit. Contacts protein L32.</text>
</comment>
<comment type="similarity">
    <text evidence="1">Belongs to the bacterial ribosomal protein bL17 family.</text>
</comment>
<proteinExistence type="inferred from homology"/>